<evidence type="ECO:0000250" key="1">
    <source>
        <dbReference type="UniProtKB" id="P27216"/>
    </source>
</evidence>
<evidence type="ECO:0000255" key="2">
    <source>
        <dbReference type="PROSITE-ProRule" id="PRU01245"/>
    </source>
</evidence>
<evidence type="ECO:0000269" key="3">
    <source>
    </source>
</evidence>
<evidence type="ECO:0000305" key="4"/>
<feature type="initiator methionine" description="Removed" evidence="1">
    <location>
        <position position="1"/>
    </location>
</feature>
<feature type="chain" id="PRO_0000067515" description="Annexin A13">
    <location>
        <begin position="2"/>
        <end position="317"/>
    </location>
</feature>
<feature type="repeat" description="Annexin 1" evidence="2">
    <location>
        <begin position="15"/>
        <end position="86"/>
    </location>
</feature>
<feature type="repeat" description="Annexin 2" evidence="2">
    <location>
        <begin position="87"/>
        <end position="158"/>
    </location>
</feature>
<feature type="repeat" description="Annexin 3" evidence="2">
    <location>
        <begin position="170"/>
        <end position="242"/>
    </location>
</feature>
<feature type="repeat" description="Annexin 4" evidence="2">
    <location>
        <begin position="246"/>
        <end position="317"/>
    </location>
</feature>
<feature type="lipid moiety-binding region" description="N-myristoyl glycine" evidence="1">
    <location>
        <position position="2"/>
    </location>
</feature>
<gene>
    <name type="primary">Anxa13</name>
</gene>
<sequence>MGNRHAKERSHHHGFDADRDAKKLYKACKGMGTDEAAIIEVLSSRTSEERQQIKQKYKEKYGKDLEEVLNSELSGNFKKTALALLDRPNEYAARQLQKAMKGVGTDEAMLIEILCTRSNKEIVAIKEAYQRLFGRSLESDVKEDTSGNLRKILVSLLQASRDEEDTVDKELAGQDAKDLYDAGEGRWGTDELAFNEVLAKRSYKQLRATFQAYQILIGKDMEETIEEETSGDLKKAYLTIVRCAQDLEGYFADLLYKAMKGMGTDEETLIRIIVTRAEVDLQGIKAKFQEKYQKSLSDMVHSDTSGDFRKLLVALLH</sequence>
<reference key="1">
    <citation type="journal article" date="2002" name="Mol. Biol. Evol.">
        <title>Comparative genetics and evolution of annexin A13 as the founder gene of vertebrate annexins.</title>
        <authorList>
            <person name="Iglesias J.M."/>
            <person name="Morgan R.O."/>
            <person name="Jenkins N.A."/>
            <person name="Copeland N.G."/>
            <person name="Gilbert D.J."/>
            <person name="Fernandez M.-P."/>
        </authorList>
    </citation>
    <scope>NUCLEOTIDE SEQUENCE [MRNA]</scope>
    <source>
        <tissue>Small intestine</tissue>
    </source>
</reference>
<reference key="2">
    <citation type="journal article" date="2004" name="Genome Res.">
        <title>The status, quality, and expansion of the NIH full-length cDNA project: the Mammalian Gene Collection (MGC).</title>
        <authorList>
            <consortium name="The MGC Project Team"/>
        </authorList>
    </citation>
    <scope>NUCLEOTIDE SEQUENCE [LARGE SCALE MRNA]</scope>
    <source>
        <strain>FVB/N</strain>
        <tissue>Kidney</tissue>
    </source>
</reference>
<reference key="3">
    <citation type="journal article" date="2010" name="Cell">
        <title>A tissue-specific atlas of mouse protein phosphorylation and expression.</title>
        <authorList>
            <person name="Huttlin E.L."/>
            <person name="Jedrychowski M.P."/>
            <person name="Elias J.E."/>
            <person name="Goswami T."/>
            <person name="Rad R."/>
            <person name="Beausoleil S.A."/>
            <person name="Villen J."/>
            <person name="Haas W."/>
            <person name="Sowa M.E."/>
            <person name="Gygi S.P."/>
        </authorList>
    </citation>
    <scope>IDENTIFICATION BY MASS SPECTROMETRY [LARGE SCALE ANALYSIS]</scope>
    <source>
        <tissue>Kidney</tissue>
    </source>
</reference>
<reference key="4">
    <citation type="journal article" date="2019" name="J. Biol. Chem.">
        <title>An alternative N-terminal fold of the intestine-specific annexin A13a induces dimerization and regulates membrane-binding.</title>
        <authorList>
            <person name="McCulloch K.M."/>
            <person name="Yamakawa I."/>
            <person name="Shifrin D.A. Jr."/>
            <person name="McConnell R.E."/>
            <person name="Foegeding N.J."/>
            <person name="Singh P.K."/>
            <person name="Mao S."/>
            <person name="Tyska M.J."/>
            <person name="Iverson T.M."/>
        </authorList>
    </citation>
    <scope>SUBCELLULAR LOCATION</scope>
    <scope>TISSUE SPECIFICITY</scope>
</reference>
<keyword id="KW-0041">Annexin</keyword>
<keyword id="KW-0106">Calcium</keyword>
<keyword id="KW-0111">Calcium/phospholipid-binding</keyword>
<keyword id="KW-1003">Cell membrane</keyword>
<keyword id="KW-0968">Cytoplasmic vesicle</keyword>
<keyword id="KW-0449">Lipoprotein</keyword>
<keyword id="KW-0472">Membrane</keyword>
<keyword id="KW-0519">Myristate</keyword>
<keyword id="KW-1185">Reference proteome</keyword>
<keyword id="KW-0677">Repeat</keyword>
<organism>
    <name type="scientific">Mus musculus</name>
    <name type="common">Mouse</name>
    <dbReference type="NCBI Taxonomy" id="10090"/>
    <lineage>
        <taxon>Eukaryota</taxon>
        <taxon>Metazoa</taxon>
        <taxon>Chordata</taxon>
        <taxon>Craniata</taxon>
        <taxon>Vertebrata</taxon>
        <taxon>Euteleostomi</taxon>
        <taxon>Mammalia</taxon>
        <taxon>Eutheria</taxon>
        <taxon>Euarchontoglires</taxon>
        <taxon>Glires</taxon>
        <taxon>Rodentia</taxon>
        <taxon>Myomorpha</taxon>
        <taxon>Muroidea</taxon>
        <taxon>Muridae</taxon>
        <taxon>Murinae</taxon>
        <taxon>Mus</taxon>
        <taxon>Mus</taxon>
    </lineage>
</organism>
<comment type="function">
    <text evidence="1">Binds to membranes enriched in phosphatidylserine or phosphatidylglycerol in a calcium-dependent manner. Half-maximal membrane binding requires about 60 uM calcium. Does not bind to membranes that lack phospholipids with an acidic headgroup.</text>
</comment>
<comment type="subunit">
    <text evidence="1">Monomer and homodimer.</text>
</comment>
<comment type="subcellular location">
    <subcellularLocation>
        <location evidence="3">Apical cell membrane</location>
    </subcellularLocation>
    <subcellularLocation>
        <location evidence="1">Cell membrane</location>
        <topology evidence="1">Lipid-anchor</topology>
    </subcellularLocation>
    <subcellularLocation>
        <location evidence="3">Cytoplasmic vesicle</location>
    </subcellularLocation>
    <text evidence="1">Myristoylation anchors the protein to the membrane, but the protein also displays calcium-dependent, reversible binding to lipid membranes.</text>
</comment>
<comment type="tissue specificity">
    <text evidence="3">Detected on the tips of microvilli in small intestine (at protein level).</text>
</comment>
<comment type="domain">
    <text>A pair of annexin repeats may form one binding site for calcium and phospholipid.</text>
</comment>
<comment type="similarity">
    <text evidence="2 4">Belongs to the annexin family.</text>
</comment>
<accession>Q99JG3</accession>
<dbReference type="EMBL" id="AJ306451">
    <property type="protein sequence ID" value="CAC34623.1"/>
    <property type="molecule type" value="mRNA"/>
</dbReference>
<dbReference type="EMBL" id="BC013521">
    <property type="protein sequence ID" value="AAH13521.1"/>
    <property type="molecule type" value="mRNA"/>
</dbReference>
<dbReference type="RefSeq" id="NP_081487.1">
    <property type="nucleotide sequence ID" value="NM_027211.2"/>
</dbReference>
<dbReference type="SMR" id="Q99JG3"/>
<dbReference type="FunCoup" id="Q99JG3">
    <property type="interactions" value="101"/>
</dbReference>
<dbReference type="IntAct" id="Q99JG3">
    <property type="interactions" value="4"/>
</dbReference>
<dbReference type="GlyGen" id="Q99JG3">
    <property type="glycosylation" value="1 site, 1 O-linked glycan (1 site)"/>
</dbReference>
<dbReference type="iPTMnet" id="Q99JG3"/>
<dbReference type="PhosphoSitePlus" id="Q99JG3"/>
<dbReference type="jPOST" id="Q99JG3"/>
<dbReference type="PeptideAtlas" id="Q99JG3"/>
<dbReference type="ProteomicsDB" id="281891"/>
<dbReference type="Antibodypedia" id="13866">
    <property type="antibodies" value="218 antibodies from 29 providers"/>
</dbReference>
<dbReference type="DNASU" id="69787"/>
<dbReference type="Ensembl" id="ENSMUST00000227274.3">
    <property type="protein sequence ID" value="ENSMUSP00000159441.2"/>
    <property type="gene ID" value="ENSMUSG00000055114.11"/>
</dbReference>
<dbReference type="GeneID" id="69787"/>
<dbReference type="KEGG" id="mmu:69787"/>
<dbReference type="UCSC" id="uc007vtm.1">
    <property type="organism name" value="mouse"/>
</dbReference>
<dbReference type="AGR" id="MGI:1917037"/>
<dbReference type="CTD" id="312"/>
<dbReference type="MGI" id="MGI:1917037">
    <property type="gene designation" value="Anxa13"/>
</dbReference>
<dbReference type="GeneTree" id="ENSGT00940000159797"/>
<dbReference type="InParanoid" id="Q99JG3"/>
<dbReference type="OMA" id="LLIGKDM"/>
<dbReference type="OrthoDB" id="37886at2759"/>
<dbReference type="BioGRID-ORCS" id="69787">
    <property type="hits" value="2 hits in 54 CRISPR screens"/>
</dbReference>
<dbReference type="ChiTaRS" id="Anxa13">
    <property type="organism name" value="mouse"/>
</dbReference>
<dbReference type="PRO" id="PR:Q99JG3"/>
<dbReference type="Proteomes" id="UP000000589">
    <property type="component" value="Chromosome 15"/>
</dbReference>
<dbReference type="RNAct" id="Q99JG3">
    <property type="molecule type" value="protein"/>
</dbReference>
<dbReference type="Bgee" id="ENSMUSG00000055114">
    <property type="expression patterns" value="Expressed in duodenum and 49 other cell types or tissues"/>
</dbReference>
<dbReference type="GO" id="GO:0016324">
    <property type="term" value="C:apical plasma membrane"/>
    <property type="evidence" value="ECO:0007669"/>
    <property type="project" value="UniProtKB-SubCell"/>
</dbReference>
<dbReference type="GO" id="GO:0031410">
    <property type="term" value="C:cytoplasmic vesicle"/>
    <property type="evidence" value="ECO:0007669"/>
    <property type="project" value="UniProtKB-KW"/>
</dbReference>
<dbReference type="GO" id="GO:0005654">
    <property type="term" value="C:nucleoplasm"/>
    <property type="evidence" value="ECO:0007669"/>
    <property type="project" value="Ensembl"/>
</dbReference>
<dbReference type="GO" id="GO:0005509">
    <property type="term" value="F:calcium ion binding"/>
    <property type="evidence" value="ECO:0007669"/>
    <property type="project" value="Ensembl"/>
</dbReference>
<dbReference type="GO" id="GO:0005544">
    <property type="term" value="F:calcium-dependent phospholipid binding"/>
    <property type="evidence" value="ECO:0007669"/>
    <property type="project" value="UniProtKB-KW"/>
</dbReference>
<dbReference type="GO" id="GO:1901611">
    <property type="term" value="F:phosphatidylglycerol binding"/>
    <property type="evidence" value="ECO:0007669"/>
    <property type="project" value="Ensembl"/>
</dbReference>
<dbReference type="GO" id="GO:0001786">
    <property type="term" value="F:phosphatidylserine binding"/>
    <property type="evidence" value="ECO:0007669"/>
    <property type="project" value="Ensembl"/>
</dbReference>
<dbReference type="FunFam" id="1.10.220.10:FF:000001">
    <property type="entry name" value="Annexin"/>
    <property type="match status" value="1"/>
</dbReference>
<dbReference type="FunFam" id="1.10.220.10:FF:000002">
    <property type="entry name" value="Annexin"/>
    <property type="match status" value="1"/>
</dbReference>
<dbReference type="FunFam" id="1.10.220.10:FF:000003">
    <property type="entry name" value="Annexin"/>
    <property type="match status" value="1"/>
</dbReference>
<dbReference type="FunFam" id="1.10.220.10:FF:000011">
    <property type="entry name" value="Annexin"/>
    <property type="match status" value="1"/>
</dbReference>
<dbReference type="Gene3D" id="1.10.220.10">
    <property type="entry name" value="Annexin"/>
    <property type="match status" value="4"/>
</dbReference>
<dbReference type="InterPro" id="IPR001464">
    <property type="entry name" value="Annexin"/>
</dbReference>
<dbReference type="InterPro" id="IPR018502">
    <property type="entry name" value="Annexin_repeat"/>
</dbReference>
<dbReference type="InterPro" id="IPR018252">
    <property type="entry name" value="Annexin_repeat_CS"/>
</dbReference>
<dbReference type="InterPro" id="IPR037104">
    <property type="entry name" value="Annexin_sf"/>
</dbReference>
<dbReference type="InterPro" id="IPR009166">
    <property type="entry name" value="ANX13"/>
</dbReference>
<dbReference type="PANTHER" id="PTHR10502">
    <property type="entry name" value="ANNEXIN"/>
    <property type="match status" value="1"/>
</dbReference>
<dbReference type="PANTHER" id="PTHR10502:SF175">
    <property type="entry name" value="ANNEXIN A13"/>
    <property type="match status" value="1"/>
</dbReference>
<dbReference type="Pfam" id="PF00191">
    <property type="entry name" value="Annexin"/>
    <property type="match status" value="4"/>
</dbReference>
<dbReference type="PRINTS" id="PR00196">
    <property type="entry name" value="ANNEXIN"/>
</dbReference>
<dbReference type="PRINTS" id="PR01811">
    <property type="entry name" value="ANNEXINXIII"/>
</dbReference>
<dbReference type="SMART" id="SM00335">
    <property type="entry name" value="ANX"/>
    <property type="match status" value="4"/>
</dbReference>
<dbReference type="SUPFAM" id="SSF47874">
    <property type="entry name" value="Annexin"/>
    <property type="match status" value="1"/>
</dbReference>
<dbReference type="PROSITE" id="PS00223">
    <property type="entry name" value="ANNEXIN_1"/>
    <property type="match status" value="3"/>
</dbReference>
<dbReference type="PROSITE" id="PS51897">
    <property type="entry name" value="ANNEXIN_2"/>
    <property type="match status" value="4"/>
</dbReference>
<name>ANX13_MOUSE</name>
<proteinExistence type="evidence at protein level"/>
<protein>
    <recommendedName>
        <fullName>Annexin A13</fullName>
    </recommendedName>
    <alternativeName>
        <fullName>Annexin XIII</fullName>
    </alternativeName>
    <alternativeName>
        <fullName>Annexin-13</fullName>
    </alternativeName>
</protein>